<reference key="1">
    <citation type="journal article" date="2006" name="Proc. Natl. Acad. Sci. U.S.A.">
        <title>Identification of genes subject to positive selection in uropathogenic strains of Escherichia coli: a comparative genomics approach.</title>
        <authorList>
            <person name="Chen S.L."/>
            <person name="Hung C.-S."/>
            <person name="Xu J."/>
            <person name="Reigstad C.S."/>
            <person name="Magrini V."/>
            <person name="Sabo A."/>
            <person name="Blasiar D."/>
            <person name="Bieri T."/>
            <person name="Meyer R.R."/>
            <person name="Ozersky P."/>
            <person name="Armstrong J.R."/>
            <person name="Fulton R.S."/>
            <person name="Latreille J.P."/>
            <person name="Spieth J."/>
            <person name="Hooton T.M."/>
            <person name="Mardis E.R."/>
            <person name="Hultgren S.J."/>
            <person name="Gordon J.I."/>
        </authorList>
    </citation>
    <scope>NUCLEOTIDE SEQUENCE [LARGE SCALE GENOMIC DNA]</scope>
    <source>
        <strain>UTI89 / UPEC</strain>
    </source>
</reference>
<accession>Q1RG60</accession>
<keyword id="KW-0068">Autocatalytic cleavage</keyword>
<keyword id="KW-0963">Cytoplasm</keyword>
<keyword id="KW-0210">Decarboxylase</keyword>
<keyword id="KW-0456">Lyase</keyword>
<keyword id="KW-0566">Pantothenate biosynthesis</keyword>
<keyword id="KW-0670">Pyruvate</keyword>
<keyword id="KW-0704">Schiff base</keyword>
<keyword id="KW-0865">Zymogen</keyword>
<organism>
    <name type="scientific">Escherichia coli (strain UTI89 / UPEC)</name>
    <dbReference type="NCBI Taxonomy" id="364106"/>
    <lineage>
        <taxon>Bacteria</taxon>
        <taxon>Pseudomonadati</taxon>
        <taxon>Pseudomonadota</taxon>
        <taxon>Gammaproteobacteria</taxon>
        <taxon>Enterobacterales</taxon>
        <taxon>Enterobacteriaceae</taxon>
        <taxon>Escherichia</taxon>
    </lineage>
</organism>
<dbReference type="EC" id="4.1.1.11" evidence="1"/>
<dbReference type="EMBL" id="CP000243">
    <property type="protein sequence ID" value="ABE05654.1"/>
    <property type="molecule type" value="Genomic_DNA"/>
</dbReference>
<dbReference type="RefSeq" id="WP_000621515.1">
    <property type="nucleotide sequence ID" value="NZ_CP064825.1"/>
</dbReference>
<dbReference type="SMR" id="Q1RG60"/>
<dbReference type="GeneID" id="93777305"/>
<dbReference type="KEGG" id="eci:UTI89_C0144"/>
<dbReference type="HOGENOM" id="CLU_115305_2_1_6"/>
<dbReference type="UniPathway" id="UPA00028">
    <property type="reaction ID" value="UER00002"/>
</dbReference>
<dbReference type="Proteomes" id="UP000001952">
    <property type="component" value="Chromosome"/>
</dbReference>
<dbReference type="GO" id="GO:0005829">
    <property type="term" value="C:cytosol"/>
    <property type="evidence" value="ECO:0007669"/>
    <property type="project" value="TreeGrafter"/>
</dbReference>
<dbReference type="GO" id="GO:0004068">
    <property type="term" value="F:aspartate 1-decarboxylase activity"/>
    <property type="evidence" value="ECO:0007669"/>
    <property type="project" value="UniProtKB-UniRule"/>
</dbReference>
<dbReference type="GO" id="GO:0006523">
    <property type="term" value="P:alanine biosynthetic process"/>
    <property type="evidence" value="ECO:0007669"/>
    <property type="project" value="InterPro"/>
</dbReference>
<dbReference type="GO" id="GO:0015940">
    <property type="term" value="P:pantothenate biosynthetic process"/>
    <property type="evidence" value="ECO:0007669"/>
    <property type="project" value="UniProtKB-UniRule"/>
</dbReference>
<dbReference type="CDD" id="cd06919">
    <property type="entry name" value="Asp_decarbox"/>
    <property type="match status" value="1"/>
</dbReference>
<dbReference type="FunFam" id="2.40.40.20:FF:000004">
    <property type="entry name" value="Aspartate 1-decarboxylase"/>
    <property type="match status" value="1"/>
</dbReference>
<dbReference type="Gene3D" id="2.40.40.20">
    <property type="match status" value="1"/>
</dbReference>
<dbReference type="HAMAP" id="MF_00446">
    <property type="entry name" value="PanD"/>
    <property type="match status" value="1"/>
</dbReference>
<dbReference type="InterPro" id="IPR009010">
    <property type="entry name" value="Asp_de-COase-like_dom_sf"/>
</dbReference>
<dbReference type="InterPro" id="IPR003190">
    <property type="entry name" value="Asp_decarbox"/>
</dbReference>
<dbReference type="NCBIfam" id="TIGR00223">
    <property type="entry name" value="panD"/>
    <property type="match status" value="1"/>
</dbReference>
<dbReference type="PANTHER" id="PTHR21012">
    <property type="entry name" value="ASPARTATE 1-DECARBOXYLASE"/>
    <property type="match status" value="1"/>
</dbReference>
<dbReference type="PANTHER" id="PTHR21012:SF0">
    <property type="entry name" value="ASPARTATE 1-DECARBOXYLASE"/>
    <property type="match status" value="1"/>
</dbReference>
<dbReference type="Pfam" id="PF02261">
    <property type="entry name" value="Asp_decarbox"/>
    <property type="match status" value="1"/>
</dbReference>
<dbReference type="PIRSF" id="PIRSF006246">
    <property type="entry name" value="Asp_decarbox"/>
    <property type="match status" value="1"/>
</dbReference>
<dbReference type="SUPFAM" id="SSF50692">
    <property type="entry name" value="ADC-like"/>
    <property type="match status" value="1"/>
</dbReference>
<comment type="function">
    <text evidence="1">Catalyzes the pyruvoyl-dependent decarboxylation of aspartate to produce beta-alanine.</text>
</comment>
<comment type="catalytic activity">
    <reaction evidence="1">
        <text>L-aspartate + H(+) = beta-alanine + CO2</text>
        <dbReference type="Rhea" id="RHEA:19497"/>
        <dbReference type="ChEBI" id="CHEBI:15378"/>
        <dbReference type="ChEBI" id="CHEBI:16526"/>
        <dbReference type="ChEBI" id="CHEBI:29991"/>
        <dbReference type="ChEBI" id="CHEBI:57966"/>
        <dbReference type="EC" id="4.1.1.11"/>
    </reaction>
</comment>
<comment type="cofactor">
    <cofactor evidence="1">
        <name>pyruvate</name>
        <dbReference type="ChEBI" id="CHEBI:15361"/>
    </cofactor>
    <text evidence="1">Binds 1 pyruvoyl group covalently per subunit.</text>
</comment>
<comment type="pathway">
    <text evidence="1">Cofactor biosynthesis; (R)-pantothenate biosynthesis; beta-alanine from L-aspartate: step 1/1.</text>
</comment>
<comment type="subunit">
    <text evidence="1">Heterooctamer of four alpha and four beta subunits.</text>
</comment>
<comment type="subcellular location">
    <subcellularLocation>
        <location evidence="1">Cytoplasm</location>
    </subcellularLocation>
</comment>
<comment type="PTM">
    <text evidence="1">Is synthesized initially as an inactive proenzyme, which is activated by self-cleavage at a specific serine bond to produce a beta-subunit with a hydroxyl group at its C-terminus and an alpha-subunit with a pyruvoyl group at its N-terminus.</text>
</comment>
<comment type="similarity">
    <text evidence="1">Belongs to the PanD family.</text>
</comment>
<proteinExistence type="inferred from homology"/>
<feature type="chain" id="PRO_0000306967" description="Aspartate 1-decarboxylase beta chain" evidence="1">
    <location>
        <begin position="1"/>
        <end position="24"/>
    </location>
</feature>
<feature type="chain" id="PRO_0000306968" description="Aspartate 1-decarboxylase alpha chain" evidence="1">
    <location>
        <begin position="25"/>
        <end position="126"/>
    </location>
</feature>
<feature type="active site" description="Schiff-base intermediate with substrate; via pyruvic acid" evidence="1">
    <location>
        <position position="25"/>
    </location>
</feature>
<feature type="active site" description="Proton donor" evidence="1">
    <location>
        <position position="58"/>
    </location>
</feature>
<feature type="binding site" evidence="1">
    <location>
        <position position="57"/>
    </location>
    <ligand>
        <name>substrate</name>
    </ligand>
</feature>
<feature type="binding site" evidence="1">
    <location>
        <begin position="73"/>
        <end position="75"/>
    </location>
    <ligand>
        <name>substrate</name>
    </ligand>
</feature>
<feature type="modified residue" description="Pyruvic acid (Ser)" evidence="1">
    <location>
        <position position="25"/>
    </location>
</feature>
<gene>
    <name evidence="1" type="primary">panD</name>
    <name type="ordered locus">UTI89_C0144</name>
</gene>
<evidence type="ECO:0000255" key="1">
    <source>
        <dbReference type="HAMAP-Rule" id="MF_00446"/>
    </source>
</evidence>
<sequence>MIRTMLQGKLHRVKVTHADLHYEGSCAIDQDFLDAAGILENEAIDIWNVTNGKRFSTYAIAAERGSRIISVNGAAAHCASVGDIVIIASFVTMPDEEARTWRPNVAYFEGDNEMKRTAKAIPVQVA</sequence>
<name>PAND_ECOUT</name>
<protein>
    <recommendedName>
        <fullName evidence="1">Aspartate 1-decarboxylase</fullName>
        <ecNumber evidence="1">4.1.1.11</ecNumber>
    </recommendedName>
    <alternativeName>
        <fullName evidence="1">Aspartate alpha-decarboxylase</fullName>
    </alternativeName>
    <component>
        <recommendedName>
            <fullName evidence="1">Aspartate 1-decarboxylase beta chain</fullName>
        </recommendedName>
    </component>
    <component>
        <recommendedName>
            <fullName evidence="1">Aspartate 1-decarboxylase alpha chain</fullName>
        </recommendedName>
    </component>
</protein>